<comment type="function">
    <text evidence="2">Cell wall formation.</text>
</comment>
<comment type="catalytic activity">
    <reaction evidence="2">
        <text>2 D-alanine + ATP = D-alanyl-D-alanine + ADP + phosphate + H(+)</text>
        <dbReference type="Rhea" id="RHEA:11224"/>
        <dbReference type="ChEBI" id="CHEBI:15378"/>
        <dbReference type="ChEBI" id="CHEBI:30616"/>
        <dbReference type="ChEBI" id="CHEBI:43474"/>
        <dbReference type="ChEBI" id="CHEBI:57416"/>
        <dbReference type="ChEBI" id="CHEBI:57822"/>
        <dbReference type="ChEBI" id="CHEBI:456216"/>
        <dbReference type="EC" id="6.3.2.4"/>
    </reaction>
</comment>
<comment type="cofactor">
    <cofactor evidence="1">
        <name>Mg(2+)</name>
        <dbReference type="ChEBI" id="CHEBI:18420"/>
    </cofactor>
    <cofactor evidence="1">
        <name>Mn(2+)</name>
        <dbReference type="ChEBI" id="CHEBI:29035"/>
    </cofactor>
    <text evidence="1">Binds 2 magnesium or manganese ions per subunit.</text>
</comment>
<comment type="pathway">
    <text evidence="2">Cell wall biogenesis; peptidoglycan biosynthesis.</text>
</comment>
<comment type="subcellular location">
    <subcellularLocation>
        <location evidence="2">Cytoplasm</location>
    </subcellularLocation>
</comment>
<comment type="similarity">
    <text evidence="2">Belongs to the D-alanine--D-alanine ligase family.</text>
</comment>
<feature type="chain" id="PRO_1000030447" description="D-alanine--D-alanine ligase">
    <location>
        <begin position="1"/>
        <end position="303"/>
    </location>
</feature>
<feature type="domain" description="ATP-grasp" evidence="2">
    <location>
        <begin position="100"/>
        <end position="295"/>
    </location>
</feature>
<feature type="binding site" evidence="2">
    <location>
        <begin position="127"/>
        <end position="180"/>
    </location>
    <ligand>
        <name>ATP</name>
        <dbReference type="ChEBI" id="CHEBI:30616"/>
    </ligand>
</feature>
<feature type="binding site" evidence="2">
    <location>
        <position position="249"/>
    </location>
    <ligand>
        <name>Mg(2+)</name>
        <dbReference type="ChEBI" id="CHEBI:18420"/>
        <label>1</label>
    </ligand>
</feature>
<feature type="binding site" evidence="2">
    <location>
        <position position="262"/>
    </location>
    <ligand>
        <name>Mg(2+)</name>
        <dbReference type="ChEBI" id="CHEBI:18420"/>
        <label>1</label>
    </ligand>
</feature>
<feature type="binding site" evidence="2">
    <location>
        <position position="262"/>
    </location>
    <ligand>
        <name>Mg(2+)</name>
        <dbReference type="ChEBI" id="CHEBI:18420"/>
        <label>2</label>
    </ligand>
</feature>
<feature type="binding site" evidence="2">
    <location>
        <position position="264"/>
    </location>
    <ligand>
        <name>Mg(2+)</name>
        <dbReference type="ChEBI" id="CHEBI:18420"/>
        <label>2</label>
    </ligand>
</feature>
<proteinExistence type="inferred from homology"/>
<name>DDL_NITV4</name>
<gene>
    <name evidence="2" type="primary">ddl</name>
    <name type="ordered locus">Dvul_2649</name>
</gene>
<keyword id="KW-0067">ATP-binding</keyword>
<keyword id="KW-0133">Cell shape</keyword>
<keyword id="KW-0961">Cell wall biogenesis/degradation</keyword>
<keyword id="KW-0963">Cytoplasm</keyword>
<keyword id="KW-0436">Ligase</keyword>
<keyword id="KW-0460">Magnesium</keyword>
<keyword id="KW-0464">Manganese</keyword>
<keyword id="KW-0479">Metal-binding</keyword>
<keyword id="KW-0547">Nucleotide-binding</keyword>
<keyword id="KW-0573">Peptidoglycan synthesis</keyword>
<dbReference type="EC" id="6.3.2.4" evidence="2"/>
<dbReference type="EMBL" id="CP000527">
    <property type="protein sequence ID" value="ABM29661.1"/>
    <property type="molecule type" value="Genomic_DNA"/>
</dbReference>
<dbReference type="RefSeq" id="WP_011792997.1">
    <property type="nucleotide sequence ID" value="NC_008751.1"/>
</dbReference>
<dbReference type="SMR" id="A1VGU5"/>
<dbReference type="KEGG" id="dvl:Dvul_2649"/>
<dbReference type="HOGENOM" id="CLU_039268_1_1_7"/>
<dbReference type="UniPathway" id="UPA00219"/>
<dbReference type="Proteomes" id="UP000009173">
    <property type="component" value="Chromosome"/>
</dbReference>
<dbReference type="GO" id="GO:0005737">
    <property type="term" value="C:cytoplasm"/>
    <property type="evidence" value="ECO:0007669"/>
    <property type="project" value="UniProtKB-SubCell"/>
</dbReference>
<dbReference type="GO" id="GO:0005524">
    <property type="term" value="F:ATP binding"/>
    <property type="evidence" value="ECO:0007669"/>
    <property type="project" value="UniProtKB-KW"/>
</dbReference>
<dbReference type="GO" id="GO:0008716">
    <property type="term" value="F:D-alanine-D-alanine ligase activity"/>
    <property type="evidence" value="ECO:0007669"/>
    <property type="project" value="UniProtKB-UniRule"/>
</dbReference>
<dbReference type="GO" id="GO:0046872">
    <property type="term" value="F:metal ion binding"/>
    <property type="evidence" value="ECO:0007669"/>
    <property type="project" value="UniProtKB-KW"/>
</dbReference>
<dbReference type="GO" id="GO:0071555">
    <property type="term" value="P:cell wall organization"/>
    <property type="evidence" value="ECO:0007669"/>
    <property type="project" value="UniProtKB-KW"/>
</dbReference>
<dbReference type="GO" id="GO:0009252">
    <property type="term" value="P:peptidoglycan biosynthetic process"/>
    <property type="evidence" value="ECO:0007669"/>
    <property type="project" value="UniProtKB-UniRule"/>
</dbReference>
<dbReference type="GO" id="GO:0008360">
    <property type="term" value="P:regulation of cell shape"/>
    <property type="evidence" value="ECO:0007669"/>
    <property type="project" value="UniProtKB-KW"/>
</dbReference>
<dbReference type="Gene3D" id="3.40.50.20">
    <property type="match status" value="1"/>
</dbReference>
<dbReference type="Gene3D" id="3.30.1490.20">
    <property type="entry name" value="ATP-grasp fold, A domain"/>
    <property type="match status" value="1"/>
</dbReference>
<dbReference type="Gene3D" id="3.30.470.20">
    <property type="entry name" value="ATP-grasp fold, B domain"/>
    <property type="match status" value="1"/>
</dbReference>
<dbReference type="HAMAP" id="MF_00047">
    <property type="entry name" value="Dala_Dala_lig"/>
    <property type="match status" value="1"/>
</dbReference>
<dbReference type="InterPro" id="IPR011761">
    <property type="entry name" value="ATP-grasp"/>
</dbReference>
<dbReference type="InterPro" id="IPR013815">
    <property type="entry name" value="ATP_grasp_subdomain_1"/>
</dbReference>
<dbReference type="InterPro" id="IPR000291">
    <property type="entry name" value="D-Ala_lig_Van_CS"/>
</dbReference>
<dbReference type="InterPro" id="IPR005905">
    <property type="entry name" value="D_ala_D_ala"/>
</dbReference>
<dbReference type="InterPro" id="IPR011095">
    <property type="entry name" value="Dala_Dala_lig_C"/>
</dbReference>
<dbReference type="InterPro" id="IPR016185">
    <property type="entry name" value="PreATP-grasp_dom_sf"/>
</dbReference>
<dbReference type="NCBIfam" id="TIGR01205">
    <property type="entry name" value="D_ala_D_alaTIGR"/>
    <property type="match status" value="1"/>
</dbReference>
<dbReference type="NCBIfam" id="NF002378">
    <property type="entry name" value="PRK01372.1"/>
    <property type="match status" value="1"/>
</dbReference>
<dbReference type="PANTHER" id="PTHR23132">
    <property type="entry name" value="D-ALANINE--D-ALANINE LIGASE"/>
    <property type="match status" value="1"/>
</dbReference>
<dbReference type="PANTHER" id="PTHR23132:SF23">
    <property type="entry name" value="D-ALANINE--D-ALANINE LIGASE B"/>
    <property type="match status" value="1"/>
</dbReference>
<dbReference type="Pfam" id="PF07478">
    <property type="entry name" value="Dala_Dala_lig_C"/>
    <property type="match status" value="1"/>
</dbReference>
<dbReference type="PIRSF" id="PIRSF039102">
    <property type="entry name" value="Ddl/VanB"/>
    <property type="match status" value="1"/>
</dbReference>
<dbReference type="SUPFAM" id="SSF56059">
    <property type="entry name" value="Glutathione synthetase ATP-binding domain-like"/>
    <property type="match status" value="1"/>
</dbReference>
<dbReference type="SUPFAM" id="SSF52440">
    <property type="entry name" value="PreATP-grasp domain"/>
    <property type="match status" value="1"/>
</dbReference>
<dbReference type="PROSITE" id="PS50975">
    <property type="entry name" value="ATP_GRASP"/>
    <property type="match status" value="1"/>
</dbReference>
<dbReference type="PROSITE" id="PS00843">
    <property type="entry name" value="DALA_DALA_LIGASE_1"/>
    <property type="match status" value="1"/>
</dbReference>
<dbReference type="PROSITE" id="PS00844">
    <property type="entry name" value="DALA_DALA_LIGASE_2"/>
    <property type="match status" value="1"/>
</dbReference>
<protein>
    <recommendedName>
        <fullName evidence="2">D-alanine--D-alanine ligase</fullName>
        <ecNumber evidence="2">6.3.2.4</ecNumber>
    </recommendedName>
    <alternativeName>
        <fullName evidence="2">D-Ala-D-Ala ligase</fullName>
    </alternativeName>
    <alternativeName>
        <fullName evidence="2">D-alanylalanine synthetase</fullName>
    </alternativeName>
</protein>
<reference key="1">
    <citation type="journal article" date="2009" name="Environ. Microbiol.">
        <title>Contribution of mobile genetic elements to Desulfovibrio vulgaris genome plasticity.</title>
        <authorList>
            <person name="Walker C.B."/>
            <person name="Stolyar S."/>
            <person name="Chivian D."/>
            <person name="Pinel N."/>
            <person name="Gabster J.A."/>
            <person name="Dehal P.S."/>
            <person name="He Z."/>
            <person name="Yang Z.K."/>
            <person name="Yen H.C."/>
            <person name="Zhou J."/>
            <person name="Wall J.D."/>
            <person name="Hazen T.C."/>
            <person name="Arkin A.P."/>
            <person name="Stahl D.A."/>
        </authorList>
    </citation>
    <scope>NUCLEOTIDE SEQUENCE [LARGE SCALE GENOMIC DNA]</scope>
    <source>
        <strain>DP4</strain>
    </source>
</reference>
<sequence length="303" mass="31712">MKVLLIAGGWSSERDVSLAGARGIEKALRALGHDVTWFDPATSLDGLLEAASSHDFAFINLHGSPGEDGLVQAMLDTAGCPYQGSGPAGSFLALNKAVSKQLLRRHGILTPDWAFLAARPAADWEPGLGYPLFVKPNTGGSSLCLSRVTQPEGLAPALEAVFAHCGEAIVEPAIPGVEVTCGVLGDTALPPILIRPAEGAFFDYTSKYTPGGATELCPAPLPAEVTAHVQDVTLRAHRLLGLRGYSRADYILRDDGALFLLEVNTLPGMTPTSLVPQEAAAIGLDFPALIARLIELGMTAAGR</sequence>
<accession>A1VGU5</accession>
<evidence type="ECO:0000250" key="1"/>
<evidence type="ECO:0000255" key="2">
    <source>
        <dbReference type="HAMAP-Rule" id="MF_00047"/>
    </source>
</evidence>
<organism>
    <name type="scientific">Nitratidesulfovibrio vulgaris (strain DP4)</name>
    <name type="common">Desulfovibrio vulgaris</name>
    <dbReference type="NCBI Taxonomy" id="391774"/>
    <lineage>
        <taxon>Bacteria</taxon>
        <taxon>Pseudomonadati</taxon>
        <taxon>Thermodesulfobacteriota</taxon>
        <taxon>Desulfovibrionia</taxon>
        <taxon>Desulfovibrionales</taxon>
        <taxon>Desulfovibrionaceae</taxon>
        <taxon>Nitratidesulfovibrio</taxon>
    </lineage>
</organism>